<protein>
    <recommendedName>
        <fullName>Triokinase/FMN cyclase</fullName>
    </recommendedName>
    <alternativeName>
        <fullName>Bifunctional ATP-dependent dihydroxyacetone kinase/FAD-AMP lyase (cyclizing)</fullName>
    </alternativeName>
    <domain>
        <recommendedName>
            <fullName>ATP-dependent dihydroxyacetone kinase</fullName>
            <shortName>DHA kinase</shortName>
            <ecNumber>2.7.1.28</ecNumber>
            <ecNumber>2.7.1.29</ecNumber>
        </recommendedName>
        <alternativeName>
            <fullName>Glycerone kinase</fullName>
        </alternativeName>
        <alternativeName>
            <fullName>Triokinase</fullName>
        </alternativeName>
        <alternativeName>
            <fullName>Triose kinase</fullName>
        </alternativeName>
    </domain>
    <domain>
        <recommendedName>
            <fullName>FAD-AMP lyase (cyclizing)</fullName>
            <ecNumber>4.6.1.15</ecNumber>
        </recommendedName>
        <alternativeName>
            <fullName>FAD-AMP lyase (cyclic FMN forming)</fullName>
        </alternativeName>
        <alternativeName>
            <fullName>FMN cyclase</fullName>
        </alternativeName>
    </domain>
</protein>
<sequence length="578" mass="59444">MSSKKMVNSVEGCAGDALAGFVACNPDLQLLQGYRVALRSDLDSLKGRVALLSGGGSGHEPAHAGFIGKGMLTGVIAGAVFASPAVGSILAAIRAVAQAGTAGTLLIVKNYTGDRLNFGLAMEQAKAEGISVEMVVIEDDSAFTVLKKAGRRGLCGTILIHKVAGALAEEGMGLEEITKKVSVIAKAIGTLGVSLSPCSVPGTKPTFELAADEMELGLGIHGEAGVRRIKLVPVDQIVTLMLDHMTDTSNISHVPVKSGSSVVLMVNNLGGLSFLELGIIADAAIRLLEGRGVKVARALVGTFMSALEMRGVSLTLMLVDEPLLKLIDAETNAKAWPHMSKVSVTGRNRIRAAPTEPAEAPEATAAGGVASKQMTLVLDRISTTLIGLEEHLNALDRAAGDGDCGSTHSRAAKAIQGWLKEGPTPASPAQVLSKLSVLLLEKMGGSSGALYGLFLTAAAQPLKANTDLPAWSAAMDAGLKAMQKYGKAAPGDRTMLDSLWAAAQELQAWKSPGASLLPVLTKAVKSAEAAAEATKNMEAGAGRASYISSAQLDQPDPGAVAAAAIFRAILEVLQTKAA</sequence>
<gene>
    <name type="primary">Tkfc</name>
    <name type="synonym">Dak</name>
</gene>
<accession>Q4KLZ6</accession>
<comment type="function">
    <text evidence="2 3 7">Catalyzes both the phosphorylation of dihydroxyacetone and of glyceraldehyde, and the splitting of ribonucleoside diphosphate-X compounds among which FAD is the best substrate (PubMed:16289032). Represses IFIH1-mediated cellular antiviral response (By similarity).</text>
</comment>
<comment type="catalytic activity">
    <reaction>
        <text>dihydroxyacetone + ATP = dihydroxyacetone phosphate + ADP + H(+)</text>
        <dbReference type="Rhea" id="RHEA:15773"/>
        <dbReference type="ChEBI" id="CHEBI:15378"/>
        <dbReference type="ChEBI" id="CHEBI:16016"/>
        <dbReference type="ChEBI" id="CHEBI:30616"/>
        <dbReference type="ChEBI" id="CHEBI:57642"/>
        <dbReference type="ChEBI" id="CHEBI:456216"/>
        <dbReference type="EC" id="2.7.1.29"/>
    </reaction>
</comment>
<comment type="catalytic activity">
    <reaction>
        <text>D-glyceraldehyde + ATP = D-glyceraldehyde 3-phosphate + ADP + H(+)</text>
        <dbReference type="Rhea" id="RHEA:13941"/>
        <dbReference type="ChEBI" id="CHEBI:15378"/>
        <dbReference type="ChEBI" id="CHEBI:17378"/>
        <dbReference type="ChEBI" id="CHEBI:30616"/>
        <dbReference type="ChEBI" id="CHEBI:59776"/>
        <dbReference type="ChEBI" id="CHEBI:456216"/>
        <dbReference type="EC" id="2.7.1.28"/>
    </reaction>
</comment>
<comment type="catalytic activity">
    <reaction>
        <text>FAD = riboflavin cyclic-4',5'-phosphate + AMP + H(+)</text>
        <dbReference type="Rhea" id="RHEA:13729"/>
        <dbReference type="ChEBI" id="CHEBI:15378"/>
        <dbReference type="ChEBI" id="CHEBI:57692"/>
        <dbReference type="ChEBI" id="CHEBI:76202"/>
        <dbReference type="ChEBI" id="CHEBI:456215"/>
        <dbReference type="EC" id="4.6.1.15"/>
    </reaction>
</comment>
<comment type="cofactor">
    <cofactor evidence="1">
        <name>Mg(2+)</name>
        <dbReference type="ChEBI" id="CHEBI:18420"/>
    </cofactor>
</comment>
<comment type="cofactor">
    <cofactor evidence="6">
        <name>Mn(2+)</name>
        <dbReference type="ChEBI" id="CHEBI:29035"/>
    </cofactor>
    <cofactor evidence="6">
        <name>Co(2+)</name>
        <dbReference type="ChEBI" id="CHEBI:48828"/>
    </cofactor>
    <text evidence="6">Manganese or cobalt are requested for FAD-AMP lyase activity.</text>
</comment>
<comment type="activity regulation">
    <text>Each activity is inhibited by the substrate(s) of the other.</text>
</comment>
<comment type="biophysicochemical properties">
    <kinetics>
        <KM evidence="6">8.8 uM for FAD with manganese</KM>
        <KM evidence="6">12.5 uM for ADP-glucose with manganese</KM>
        <KM evidence="6">652 uM for UDP-glucose with manganese</KM>
        <KM evidence="6">606 uM for UDP-galactose with manganese</KM>
        <KM evidence="6">714 uM for UDP-xylose with manganese</KM>
        <KM evidence="6">107 uM for UDP-glucuronate with manganese</KM>
        <KM evidence="6">108 uM for UDP-galacturonate with manganese</KM>
        <KM evidence="6">416 uM for CDP-glucose with manganese</KM>
        <KM evidence="6">795 uM for CDP-glycerol with manganese</KM>
        <KM evidence="6">784 uM for GDP-glucose with manganese</KM>
        <KM evidence="6">343 uM for GDP-alpha-L-fucose with manganese</KM>
        <KM evidence="6">114 uM for FAD with cobalt</KM>
        <KM evidence="6">120 uM for ADP-glucose with cobalt</KM>
        <KM evidence="6">2550 uM for UDP-glucose with cobalt</KM>
        <KM evidence="6">3661 uM for UDP-galactose with cobalt</KM>
        <KM evidence="6">2354 uM for UDP-xylose with cobalt</KM>
        <KM evidence="6">539 uM for UDP-glucuronate with cobalt</KM>
        <KM evidence="6">759 uM for UDP-galacturonate with cobalt</KM>
        <KM evidence="6">3703 uM for CDP-glucose with cobalt</KM>
        <KM evidence="6">2031 uM for CDP-glycerol with cobalt</KM>
        <KM evidence="6">2246 uM for GDP-glucose with cobalt</KM>
        <KM evidence="6">991 uM for GDP-alpha-L-fucose with cobalt</KM>
    </kinetics>
</comment>
<comment type="subunit">
    <text evidence="2 3">Homodimer (By similarity). Interacts with IFIH1 (via the CARD domains), the interaction is inhibited by viral infection (By similarity).</text>
</comment>
<comment type="domain">
    <text evidence="3">DhaK and DhaL domains have differential roles, individually DhaK is inactive and DhaL displays cyclase but not kinase activity.</text>
</comment>
<comment type="similarity">
    <text evidence="8">Belongs to the dihydroxyacetone kinase (DAK) family.</text>
</comment>
<dbReference type="EC" id="2.7.1.28"/>
<dbReference type="EC" id="2.7.1.29"/>
<dbReference type="EC" id="4.6.1.15"/>
<dbReference type="EMBL" id="BC098925">
    <property type="protein sequence ID" value="AAH98925.1"/>
    <property type="molecule type" value="mRNA"/>
</dbReference>
<dbReference type="RefSeq" id="NP_001034120.1">
    <property type="nucleotide sequence ID" value="NM_001039031.1"/>
</dbReference>
<dbReference type="RefSeq" id="XP_006231118.1">
    <property type="nucleotide sequence ID" value="XM_006231056.5"/>
</dbReference>
<dbReference type="RefSeq" id="XP_006231119.3">
    <property type="nucleotide sequence ID" value="XM_006231057.4"/>
</dbReference>
<dbReference type="SMR" id="Q4KLZ6"/>
<dbReference type="FunCoup" id="Q4KLZ6">
    <property type="interactions" value="1940"/>
</dbReference>
<dbReference type="STRING" id="10116.ENSRNOP00000028102"/>
<dbReference type="GlyGen" id="Q4KLZ6">
    <property type="glycosylation" value="1 site"/>
</dbReference>
<dbReference type="iPTMnet" id="Q4KLZ6"/>
<dbReference type="PhosphoSitePlus" id="Q4KLZ6"/>
<dbReference type="jPOST" id="Q4KLZ6"/>
<dbReference type="PaxDb" id="10116-ENSRNOP00000028102"/>
<dbReference type="Ensembl" id="ENSRNOT00000028102.6">
    <property type="protein sequence ID" value="ENSRNOP00000028102.4"/>
    <property type="gene ID" value="ENSRNOG00000020704.6"/>
</dbReference>
<dbReference type="GeneID" id="361730"/>
<dbReference type="KEGG" id="rno:361730"/>
<dbReference type="UCSC" id="RGD:1311026">
    <property type="organism name" value="rat"/>
</dbReference>
<dbReference type="AGR" id="RGD:1311026"/>
<dbReference type="CTD" id="26007"/>
<dbReference type="RGD" id="1311026">
    <property type="gene designation" value="Tkfc"/>
</dbReference>
<dbReference type="eggNOG" id="KOG2426">
    <property type="taxonomic scope" value="Eukaryota"/>
</dbReference>
<dbReference type="GeneTree" id="ENSGT00390000015415"/>
<dbReference type="HOGENOM" id="CLU_017054_6_2_1"/>
<dbReference type="InParanoid" id="Q4KLZ6"/>
<dbReference type="PhylomeDB" id="Q4KLZ6"/>
<dbReference type="TreeFam" id="TF313821"/>
<dbReference type="BioCyc" id="MetaCyc:MONOMER-15866"/>
<dbReference type="Reactome" id="R-RNO-70350">
    <property type="pathway name" value="Fructose catabolism"/>
</dbReference>
<dbReference type="PRO" id="PR:Q4KLZ6"/>
<dbReference type="Proteomes" id="UP000002494">
    <property type="component" value="Chromosome 1"/>
</dbReference>
<dbReference type="Bgee" id="ENSRNOG00000020704">
    <property type="expression patterns" value="Expressed in duodenum and 19 other cell types or tissues"/>
</dbReference>
<dbReference type="GO" id="GO:0005829">
    <property type="term" value="C:cytosol"/>
    <property type="evidence" value="ECO:0000314"/>
    <property type="project" value="MGI"/>
</dbReference>
<dbReference type="GO" id="GO:0005524">
    <property type="term" value="F:ATP binding"/>
    <property type="evidence" value="ECO:0007669"/>
    <property type="project" value="UniProtKB-KW"/>
</dbReference>
<dbReference type="GO" id="GO:0034012">
    <property type="term" value="F:FAD-AMP lyase (cyclizing) activity"/>
    <property type="evidence" value="ECO:0000266"/>
    <property type="project" value="RGD"/>
</dbReference>
<dbReference type="GO" id="GO:0004371">
    <property type="term" value="F:glycerone kinase activity"/>
    <property type="evidence" value="ECO:0000266"/>
    <property type="project" value="RGD"/>
</dbReference>
<dbReference type="GO" id="GO:0046872">
    <property type="term" value="F:metal ion binding"/>
    <property type="evidence" value="ECO:0007669"/>
    <property type="project" value="UniProtKB-KW"/>
</dbReference>
<dbReference type="GO" id="GO:0050354">
    <property type="term" value="F:triokinase activity"/>
    <property type="evidence" value="ECO:0000314"/>
    <property type="project" value="MGI"/>
</dbReference>
<dbReference type="GO" id="GO:0005975">
    <property type="term" value="P:carbohydrate metabolic process"/>
    <property type="evidence" value="ECO:0000266"/>
    <property type="project" value="RGD"/>
</dbReference>
<dbReference type="GO" id="GO:0046835">
    <property type="term" value="P:carbohydrate phosphorylation"/>
    <property type="evidence" value="ECO:0000266"/>
    <property type="project" value="RGD"/>
</dbReference>
<dbReference type="GO" id="GO:0061624">
    <property type="term" value="P:fructose catabolic process to hydroxyacetone phosphate and glyceraldehyde-3-phosphate"/>
    <property type="evidence" value="ECO:0000266"/>
    <property type="project" value="RGD"/>
</dbReference>
<dbReference type="GO" id="GO:0019563">
    <property type="term" value="P:glycerol catabolic process"/>
    <property type="evidence" value="ECO:0000318"/>
    <property type="project" value="GO_Central"/>
</dbReference>
<dbReference type="GO" id="GO:0039534">
    <property type="term" value="P:negative regulation of MDA-5 signaling pathway"/>
    <property type="evidence" value="ECO:0000250"/>
    <property type="project" value="UniProtKB"/>
</dbReference>
<dbReference type="GO" id="GO:0045088">
    <property type="term" value="P:regulation of innate immune response"/>
    <property type="evidence" value="ECO:0000266"/>
    <property type="project" value="RGD"/>
</dbReference>
<dbReference type="FunFam" id="1.25.40.340:FF:000001">
    <property type="entry name" value="Dihydroxyacetone kinase 1"/>
    <property type="match status" value="1"/>
</dbReference>
<dbReference type="FunFam" id="3.40.50.10440:FF:000001">
    <property type="entry name" value="Dihydroxyacetone kinase, DhaK subunit"/>
    <property type="match status" value="1"/>
</dbReference>
<dbReference type="FunFam" id="3.30.1180.20:FF:000003">
    <property type="entry name" value="triokinase/FMN cyclase isoform X1"/>
    <property type="match status" value="1"/>
</dbReference>
<dbReference type="Gene3D" id="1.25.40.340">
    <property type="match status" value="1"/>
</dbReference>
<dbReference type="Gene3D" id="3.40.50.10440">
    <property type="entry name" value="Dihydroxyacetone kinase, domain 1"/>
    <property type="match status" value="1"/>
</dbReference>
<dbReference type="Gene3D" id="3.30.1180.20">
    <property type="entry name" value="Dihydroxyacetone kinase, domain 2"/>
    <property type="match status" value="1"/>
</dbReference>
<dbReference type="InterPro" id="IPR012734">
    <property type="entry name" value="DhaK_ATP"/>
</dbReference>
<dbReference type="InterPro" id="IPR004006">
    <property type="entry name" value="DhaK_dom"/>
</dbReference>
<dbReference type="InterPro" id="IPR004007">
    <property type="entry name" value="DhaL_dom"/>
</dbReference>
<dbReference type="InterPro" id="IPR036117">
    <property type="entry name" value="DhaL_dom_sf"/>
</dbReference>
<dbReference type="InterPro" id="IPR050861">
    <property type="entry name" value="Dihydroxyacetone_Kinase"/>
</dbReference>
<dbReference type="NCBIfam" id="TIGR02361">
    <property type="entry name" value="dak_ATP"/>
    <property type="match status" value="1"/>
</dbReference>
<dbReference type="NCBIfam" id="NF011049">
    <property type="entry name" value="PRK14479.1"/>
    <property type="match status" value="1"/>
</dbReference>
<dbReference type="PANTHER" id="PTHR28629">
    <property type="entry name" value="TRIOKINASE/FMN CYCLASE"/>
    <property type="match status" value="1"/>
</dbReference>
<dbReference type="PANTHER" id="PTHR28629:SF4">
    <property type="entry name" value="TRIOKINASE_FMN CYCLASE"/>
    <property type="match status" value="1"/>
</dbReference>
<dbReference type="Pfam" id="PF02733">
    <property type="entry name" value="Dak1"/>
    <property type="match status" value="1"/>
</dbReference>
<dbReference type="Pfam" id="PF02734">
    <property type="entry name" value="Dak2"/>
    <property type="match status" value="1"/>
</dbReference>
<dbReference type="SMART" id="SM01120">
    <property type="entry name" value="Dak2"/>
    <property type="match status" value="1"/>
</dbReference>
<dbReference type="SUPFAM" id="SSF82549">
    <property type="entry name" value="DAK1/DegV-like"/>
    <property type="match status" value="1"/>
</dbReference>
<dbReference type="SUPFAM" id="SSF101473">
    <property type="entry name" value="DhaL-like"/>
    <property type="match status" value="1"/>
</dbReference>
<dbReference type="PROSITE" id="PS51481">
    <property type="entry name" value="DHAK"/>
    <property type="match status" value="1"/>
</dbReference>
<dbReference type="PROSITE" id="PS51480">
    <property type="entry name" value="DHAL"/>
    <property type="match status" value="1"/>
</dbReference>
<name>TKFC_RAT</name>
<proteinExistence type="evidence at protein level"/>
<reference key="1">
    <citation type="journal article" date="2004" name="Genome Res.">
        <title>The status, quality, and expansion of the NIH full-length cDNA project: the Mammalian Gene Collection (MGC).</title>
        <authorList>
            <consortium name="The MGC Project Team"/>
        </authorList>
    </citation>
    <scope>NUCLEOTIDE SEQUENCE [LARGE SCALE MRNA]</scope>
    <source>
        <strain>Brown Norway</strain>
        <tissue>Testis</tissue>
    </source>
</reference>
<reference key="2">
    <citation type="journal article" date="2005" name="Biochem. Biophys. Res. Commun.">
        <title>Identification of human and rat FAD-AMP lyase (cyclic FMN forming) as ATP-dependent dihydroxyacetone kinases.</title>
        <authorList>
            <person name="Cabezas A."/>
            <person name="Costas M.J."/>
            <person name="Pinto R.M."/>
            <person name="Couto A."/>
            <person name="Cameselle J.C."/>
        </authorList>
    </citation>
    <scope>FUNCTION</scope>
    <scope>FAD-AMP LYASE ACTIVITY</scope>
</reference>
<reference key="3">
    <citation type="journal article" date="2001" name="Biochemistry">
        <title>Purification, characterization, and substrate and inhibitor structure-activity studies of rat liver FAD-AMP lyase (cyclizing): preference for FAD and specificity for splitting ribonucleoside diphosphate-X into ribonucleotide and a five-atom cyclic phosphodiester of X, either a monocyclic compound or a cis-bicyclic phosphodiester-pyranose fusion.</title>
        <authorList>
            <person name="Cabezas A."/>
            <person name="Pinto R.M."/>
            <person name="Fraiz F."/>
            <person name="Canales J."/>
            <person name="Gonzalez-Santiago S."/>
            <person name="Cameselle J.C."/>
        </authorList>
    </citation>
    <scope>COFACTOR</scope>
    <scope>BIOPHYSICOCHEMICAL PROPERTIES</scope>
</reference>
<reference key="4">
    <citation type="journal article" date="2012" name="Nat. Commun.">
        <title>Quantitative maps of protein phosphorylation sites across 14 different rat organs and tissues.</title>
        <authorList>
            <person name="Lundby A."/>
            <person name="Secher A."/>
            <person name="Lage K."/>
            <person name="Nordsborg N.B."/>
            <person name="Dmytriyev A."/>
            <person name="Lundby C."/>
            <person name="Olsen J.V."/>
        </authorList>
    </citation>
    <scope>PHOSPHORYLATION [LARGE SCALE ANALYSIS] AT SER-511 AND SER-545</scope>
    <scope>IDENTIFICATION BY MASS SPECTROMETRY [LARGE SCALE ANALYSIS]</scope>
</reference>
<feature type="chain" id="PRO_0000121527" description="Triokinase/FMN cyclase">
    <location>
        <begin position="1"/>
        <end position="578"/>
    </location>
</feature>
<feature type="domain" description="DhaK" evidence="5">
    <location>
        <begin position="9"/>
        <end position="336"/>
    </location>
</feature>
<feature type="domain" description="DhaL" evidence="4">
    <location>
        <begin position="372"/>
        <end position="571"/>
    </location>
</feature>
<feature type="active site" description="Tele-hemiaminal-histidine intermediate" evidence="5">
    <location>
        <position position="221"/>
    </location>
</feature>
<feature type="binding site" evidence="1">
    <location>
        <begin position="56"/>
        <end position="59"/>
    </location>
    <ligand>
        <name>dihydroxyacetone</name>
        <dbReference type="ChEBI" id="CHEBI:16016"/>
    </ligand>
</feature>
<feature type="binding site" evidence="5">
    <location>
        <position position="109"/>
    </location>
    <ligand>
        <name>dihydroxyacetone</name>
        <dbReference type="ChEBI" id="CHEBI:16016"/>
    </ligand>
</feature>
<feature type="binding site" evidence="5">
    <location>
        <position position="114"/>
    </location>
    <ligand>
        <name>dihydroxyacetone</name>
        <dbReference type="ChEBI" id="CHEBI:16016"/>
    </ligand>
</feature>
<feature type="binding site" evidence="1">
    <location>
        <begin position="401"/>
        <end position="404"/>
    </location>
    <ligand>
        <name>ATP</name>
        <dbReference type="ChEBI" id="CHEBI:30616"/>
    </ligand>
</feature>
<feature type="binding site" evidence="1">
    <location>
        <begin position="446"/>
        <end position="447"/>
    </location>
    <ligand>
        <name>ATP</name>
        <dbReference type="ChEBI" id="CHEBI:30616"/>
    </ligand>
</feature>
<feature type="binding site" evidence="1">
    <location>
        <position position="486"/>
    </location>
    <ligand>
        <name>ATP</name>
        <dbReference type="ChEBI" id="CHEBI:30616"/>
    </ligand>
</feature>
<feature type="binding site" evidence="1">
    <location>
        <begin position="494"/>
        <end position="495"/>
    </location>
    <ligand>
        <name>ATP</name>
        <dbReference type="ChEBI" id="CHEBI:30616"/>
    </ligand>
</feature>
<feature type="binding site" evidence="1">
    <location>
        <begin position="556"/>
        <end position="558"/>
    </location>
    <ligand>
        <name>ATP</name>
        <dbReference type="ChEBI" id="CHEBI:30616"/>
    </ligand>
</feature>
<feature type="modified residue" description="Phosphoserine" evidence="9">
    <location>
        <position position="511"/>
    </location>
</feature>
<feature type="modified residue" description="Phosphoserine" evidence="9">
    <location>
        <position position="545"/>
    </location>
</feature>
<organism>
    <name type="scientific">Rattus norvegicus</name>
    <name type="common">Rat</name>
    <dbReference type="NCBI Taxonomy" id="10116"/>
    <lineage>
        <taxon>Eukaryota</taxon>
        <taxon>Metazoa</taxon>
        <taxon>Chordata</taxon>
        <taxon>Craniata</taxon>
        <taxon>Vertebrata</taxon>
        <taxon>Euteleostomi</taxon>
        <taxon>Mammalia</taxon>
        <taxon>Eutheria</taxon>
        <taxon>Euarchontoglires</taxon>
        <taxon>Glires</taxon>
        <taxon>Rodentia</taxon>
        <taxon>Myomorpha</taxon>
        <taxon>Muroidea</taxon>
        <taxon>Muridae</taxon>
        <taxon>Murinae</taxon>
        <taxon>Rattus</taxon>
    </lineage>
</organism>
<keyword id="KW-0067">ATP-binding</keyword>
<keyword id="KW-0170">Cobalt</keyword>
<keyword id="KW-0274">FAD</keyword>
<keyword id="KW-0285">Flavoprotein</keyword>
<keyword id="KW-0418">Kinase</keyword>
<keyword id="KW-0456">Lyase</keyword>
<keyword id="KW-0460">Magnesium</keyword>
<keyword id="KW-0464">Manganese</keyword>
<keyword id="KW-0479">Metal-binding</keyword>
<keyword id="KW-0511">Multifunctional enzyme</keyword>
<keyword id="KW-0547">Nucleotide-binding</keyword>
<keyword id="KW-0597">Phosphoprotein</keyword>
<keyword id="KW-1185">Reference proteome</keyword>
<keyword id="KW-0808">Transferase</keyword>
<evidence type="ECO:0000250" key="1"/>
<evidence type="ECO:0000250" key="2">
    <source>
        <dbReference type="UniProtKB" id="F1RKQ4"/>
    </source>
</evidence>
<evidence type="ECO:0000250" key="3">
    <source>
        <dbReference type="UniProtKB" id="Q3LXA3"/>
    </source>
</evidence>
<evidence type="ECO:0000255" key="4">
    <source>
        <dbReference type="PROSITE-ProRule" id="PRU00813"/>
    </source>
</evidence>
<evidence type="ECO:0000255" key="5">
    <source>
        <dbReference type="PROSITE-ProRule" id="PRU00814"/>
    </source>
</evidence>
<evidence type="ECO:0000269" key="6">
    <source>
    </source>
</evidence>
<evidence type="ECO:0000269" key="7">
    <source>
    </source>
</evidence>
<evidence type="ECO:0000305" key="8"/>
<evidence type="ECO:0007744" key="9">
    <source>
    </source>
</evidence>